<sequence length="20" mass="2027">GLLASLGKVLGGYLAEKLKP</sequence>
<comment type="function">
    <text evidence="1">Has no antimicrobial activity. Strongly inhibits the formation of NO by neuronal nitric oxide synthase at micromolar concentrations.</text>
</comment>
<comment type="subcellular location">
    <subcellularLocation>
        <location evidence="1">Secreted</location>
    </subcellularLocation>
</comment>
<comment type="tissue specificity">
    <text evidence="1">Expressed by the skin dorsal glands.</text>
</comment>
<comment type="mass spectrometry" mass="2025.0" method="Electrospray" evidence="1"/>
<proteinExistence type="evidence at protein level"/>
<dbReference type="GO" id="GO:0005576">
    <property type="term" value="C:extracellular region"/>
    <property type="evidence" value="ECO:0000314"/>
    <property type="project" value="UniProtKB"/>
</dbReference>
<dbReference type="GO" id="GO:0030235">
    <property type="term" value="F:nitric-oxide synthase regulator activity"/>
    <property type="evidence" value="ECO:0000314"/>
    <property type="project" value="UniProtKB"/>
</dbReference>
<dbReference type="GO" id="GO:0006952">
    <property type="term" value="P:defense response"/>
    <property type="evidence" value="ECO:0007669"/>
    <property type="project" value="UniProtKB-KW"/>
</dbReference>
<dbReference type="GO" id="GO:0051001">
    <property type="term" value="P:negative regulation of nitric-oxide synthase activity"/>
    <property type="evidence" value="ECO:0000314"/>
    <property type="project" value="UniProtKB"/>
</dbReference>
<organism>
    <name type="scientific">Ranoidea dahlii</name>
    <name type="common">Dahl's aquatic frog</name>
    <name type="synonym">Litoria dahlii</name>
    <dbReference type="NCBI Taxonomy" id="299727"/>
    <lineage>
        <taxon>Eukaryota</taxon>
        <taxon>Metazoa</taxon>
        <taxon>Chordata</taxon>
        <taxon>Craniata</taxon>
        <taxon>Vertebrata</taxon>
        <taxon>Euteleostomi</taxon>
        <taxon>Amphibia</taxon>
        <taxon>Batrachia</taxon>
        <taxon>Anura</taxon>
        <taxon>Neobatrachia</taxon>
        <taxon>Hyloidea</taxon>
        <taxon>Hylidae</taxon>
        <taxon>Pelodryadinae</taxon>
        <taxon>Ranoidea</taxon>
    </lineage>
</organism>
<protein>
    <recommendedName>
        <fullName>Dahlein-5.3</fullName>
    </recommendedName>
</protein>
<feature type="peptide" id="PRO_0000043779" description="Dahlein-5.3">
    <location>
        <begin position="1"/>
        <end position="20"/>
    </location>
</feature>
<accession>P84269</accession>
<keyword id="KW-0878">Amphibian defense peptide</keyword>
<keyword id="KW-0903">Direct protein sequencing</keyword>
<keyword id="KW-0964">Secreted</keyword>
<evidence type="ECO:0000269" key="1">
    <source>
    </source>
</evidence>
<evidence type="ECO:0000305" key="2"/>
<reference evidence="2" key="1">
    <citation type="journal article" date="2001" name="Rapid Commun. Mass Spectrom.">
        <title>Bioactive dahlein peptides from the skin secretions of the Australian aquatic frog Litoria dahlii: sequence determination by electrospray mass spectrometry.</title>
        <authorList>
            <person name="Wegener K.L."/>
            <person name="Brinkworth C.S."/>
            <person name="Bowie J.H."/>
            <person name="Wallace J.C."/>
            <person name="Tyler M.J."/>
        </authorList>
    </citation>
    <scope>PROTEIN SEQUENCE</scope>
    <scope>FUNCTION</scope>
    <scope>SUBCELLULAR LOCATION</scope>
    <scope>TISSUE SPECIFICITY</scope>
    <scope>MASS SPECTROMETRY</scope>
    <source>
        <tissue evidence="1">Skin secretion</tissue>
    </source>
</reference>
<name>DAH53_RANDH</name>